<accession>P10096</accession>
<accession>P79130</accession>
<accession>Q3ZCB1</accession>
<feature type="initiator methionine" description="Removed" evidence="6 7">
    <location>
        <position position="1"/>
    </location>
</feature>
<feature type="chain" id="PRO_0000145481" description="Glyceraldehyde-3-phosphate dehydrogenase">
    <location>
        <begin position="2"/>
        <end position="333"/>
    </location>
</feature>
<feature type="region of interest" description="Interaction with WARS1" evidence="1">
    <location>
        <begin position="2"/>
        <end position="146"/>
    </location>
</feature>
<feature type="short sequence motif" description="[IL]-x-C-x-x-[DE] motif" evidence="1">
    <location>
        <begin position="243"/>
        <end position="248"/>
    </location>
</feature>
<feature type="active site" description="Nucleophile" evidence="5">
    <location>
        <position position="150"/>
    </location>
</feature>
<feature type="binding site" evidence="1">
    <location>
        <begin position="11"/>
        <end position="12"/>
    </location>
    <ligand>
        <name>NAD(+)</name>
        <dbReference type="ChEBI" id="CHEBI:57540"/>
    </ligand>
</feature>
<feature type="binding site" evidence="1">
    <location>
        <position position="33"/>
    </location>
    <ligand>
        <name>NAD(+)</name>
        <dbReference type="ChEBI" id="CHEBI:57540"/>
    </ligand>
</feature>
<feature type="binding site" evidence="1">
    <location>
        <position position="78"/>
    </location>
    <ligand>
        <name>NAD(+)</name>
        <dbReference type="ChEBI" id="CHEBI:57540"/>
    </ligand>
</feature>
<feature type="binding site" evidence="1">
    <location>
        <position position="120"/>
    </location>
    <ligand>
        <name>NAD(+)</name>
        <dbReference type="ChEBI" id="CHEBI:57540"/>
    </ligand>
</feature>
<feature type="binding site" evidence="4">
    <location>
        <begin position="149"/>
        <end position="151"/>
    </location>
    <ligand>
        <name>D-glyceraldehyde 3-phosphate</name>
        <dbReference type="ChEBI" id="CHEBI:59776"/>
    </ligand>
</feature>
<feature type="binding site" evidence="4">
    <location>
        <position position="180"/>
    </location>
    <ligand>
        <name>D-glyceraldehyde 3-phosphate</name>
        <dbReference type="ChEBI" id="CHEBI:59776"/>
    </ligand>
</feature>
<feature type="binding site" evidence="4">
    <location>
        <begin position="209"/>
        <end position="210"/>
    </location>
    <ligand>
        <name>D-glyceraldehyde 3-phosphate</name>
        <dbReference type="ChEBI" id="CHEBI:59776"/>
    </ligand>
</feature>
<feature type="binding site" evidence="4">
    <location>
        <position position="232"/>
    </location>
    <ligand>
        <name>D-glyceraldehyde 3-phosphate</name>
        <dbReference type="ChEBI" id="CHEBI:59776"/>
    </ligand>
</feature>
<feature type="binding site" evidence="1">
    <location>
        <position position="314"/>
    </location>
    <ligand>
        <name>NAD(+)</name>
        <dbReference type="ChEBI" id="CHEBI:57540"/>
    </ligand>
</feature>
<feature type="site" description="Activates thiol group during catalysis" evidence="1">
    <location>
        <position position="177"/>
    </location>
</feature>
<feature type="modified residue" description="N6,N6-dimethyllysine" evidence="1">
    <location>
        <position position="3"/>
    </location>
</feature>
<feature type="modified residue" description="Deamidated asparagine" evidence="1">
    <location>
        <position position="7"/>
    </location>
</feature>
<feature type="modified residue" description="Phosphotyrosine" evidence="1">
    <location>
        <position position="40"/>
    </location>
</feature>
<feature type="modified residue" description="N6-acetyllysine" evidence="1">
    <location>
        <position position="59"/>
    </location>
</feature>
<feature type="modified residue" description="Deamidated asparagine" evidence="1">
    <location>
        <position position="62"/>
    </location>
</feature>
<feature type="modified residue" description="N6,N6-dimethyllysine" evidence="1">
    <location>
        <position position="64"/>
    </location>
</feature>
<feature type="modified residue" description="Deamidated asparagine" evidence="1">
    <location>
        <position position="68"/>
    </location>
</feature>
<feature type="modified residue" description="Phosphothreonine" evidence="1">
    <location>
        <position position="73"/>
    </location>
</feature>
<feature type="modified residue" description="Phosphoserine" evidence="1">
    <location>
        <position position="120"/>
    </location>
</feature>
<feature type="modified residue" description="Phosphoserine" evidence="1">
    <location>
        <position position="146"/>
    </location>
</feature>
<feature type="modified residue" description="Deamidated asparagine" evidence="1">
    <location>
        <position position="147"/>
    </location>
</feature>
<feature type="modified residue" description="Phosphoserine" evidence="1">
    <location>
        <position position="149"/>
    </location>
</feature>
<feature type="modified residue" description="ADP-ribosylcysteine; by autocatalysis; in irreversibly inhibited form" evidence="2">
    <location>
        <position position="150"/>
    </location>
</feature>
<feature type="modified residue" description="Cysteine persulfide" evidence="3">
    <location>
        <position position="150"/>
    </location>
</feature>
<feature type="modified residue" description="S-(2-succinyl)cysteine" evidence="2">
    <location>
        <position position="150"/>
    </location>
</feature>
<feature type="modified residue" description="S-nitrosocysteine; in reversibly inhibited form" evidence="2">
    <location>
        <position position="150"/>
    </location>
</feature>
<feature type="modified residue" description="Phosphothreonine" evidence="1">
    <location>
        <position position="151"/>
    </location>
</feature>
<feature type="modified residue" description="Deamidated asparagine" evidence="1">
    <location>
        <position position="153"/>
    </location>
</feature>
<feature type="modified residue" description="Phosphothreonine" evidence="1">
    <location>
        <position position="175"/>
    </location>
</feature>
<feature type="modified residue" description="Phosphothreonine" evidence="1">
    <location>
        <position position="180"/>
    </location>
</feature>
<feature type="modified residue" description="Phosphothreonine" evidence="1">
    <location>
        <position position="182"/>
    </location>
</feature>
<feature type="modified residue" description="N6,N6-dimethyllysine; alternate" evidence="1">
    <location>
        <position position="192"/>
    </location>
</feature>
<feature type="modified residue" description="N6-acetyllysine; alternate" evidence="1">
    <location>
        <position position="192"/>
    </location>
</feature>
<feature type="modified residue" description="N6-malonyllysine; alternate" evidence="1">
    <location>
        <position position="192"/>
    </location>
</feature>
<feature type="modified residue" description="Phosphothreonine" evidence="1">
    <location>
        <position position="209"/>
    </location>
</feature>
<feature type="modified residue" description="N6,N6-dimethyllysine; alternate" evidence="1">
    <location>
        <position position="213"/>
    </location>
</feature>
<feature type="modified residue" description="N6-malonyllysine; alternate" evidence="1">
    <location>
        <position position="213"/>
    </location>
</feature>
<feature type="modified residue" description="N6-acetyllysine" evidence="1">
    <location>
        <position position="217"/>
    </location>
</feature>
<feature type="modified residue" description="Deamidated asparagine" evidence="1">
    <location>
        <position position="223"/>
    </location>
</feature>
<feature type="modified residue" description="N6,N6-dimethyllysine; alternate" evidence="1">
    <location>
        <position position="225"/>
    </location>
</feature>
<feature type="modified residue" description="N6-acetyllysine; alternate" evidence="1">
    <location>
        <position position="225"/>
    </location>
</feature>
<feature type="modified residue" description="Phosphothreonine" evidence="1">
    <location>
        <position position="227"/>
    </location>
</feature>
<feature type="modified residue" description="Phosphothreonine" evidence="1">
    <location>
        <position position="235"/>
    </location>
</feature>
<feature type="modified residue" description="Phosphoserine" evidence="1">
    <location>
        <position position="239"/>
    </location>
</feature>
<feature type="modified residue" description="S-(2-succinyl)cysteine" evidence="2">
    <location>
        <position position="245"/>
    </location>
</feature>
<feature type="modified residue" description="S-nitrosocysteine" evidence="1">
    <location>
        <position position="245"/>
    </location>
</feature>
<feature type="modified residue" description="N6-acetyllysine" evidence="1">
    <location>
        <position position="252"/>
    </location>
</feature>
<feature type="modified residue" description="N6,N6-dimethyllysine" evidence="1">
    <location>
        <position position="258"/>
    </location>
</feature>
<feature type="modified residue" description="N6,N6-dimethyllysine" evidence="1">
    <location>
        <position position="261"/>
    </location>
</feature>
<feature type="modified residue" description="Phosphoserine" evidence="1">
    <location>
        <position position="310"/>
    </location>
</feature>
<feature type="modified residue" description="Deamidated asparagine" evidence="1">
    <location>
        <position position="314"/>
    </location>
</feature>
<feature type="modified residue" description="Phosphoserine" evidence="1">
    <location>
        <position position="331"/>
    </location>
</feature>
<feature type="modified residue" description="N6,N6-dimethyllysine" evidence="1">
    <location>
        <position position="332"/>
    </location>
</feature>
<feature type="cross-link" description="Glycyl lysine isopeptide (Lys-Gly) (interchain with G-Cter in SUMO2)" evidence="1">
    <location>
        <position position="184"/>
    </location>
</feature>
<feature type="sequence conflict" description="In Ref. 2; AA sequence." evidence="8" ref="2">
    <original>A</original>
    <variation>F</variation>
    <location>
        <position position="30"/>
    </location>
</feature>
<feature type="strand" evidence="9">
    <location>
        <begin position="3"/>
        <end position="7"/>
    </location>
</feature>
<feature type="helix" evidence="9">
    <location>
        <begin position="11"/>
        <end position="21"/>
    </location>
</feature>
<feature type="strand" evidence="9">
    <location>
        <begin position="27"/>
        <end position="32"/>
    </location>
</feature>
<feature type="helix" evidence="9">
    <location>
        <begin position="38"/>
        <end position="46"/>
    </location>
</feature>
<feature type="turn" evidence="9">
    <location>
        <begin position="49"/>
        <end position="51"/>
    </location>
</feature>
<feature type="strand" evidence="9">
    <location>
        <begin position="58"/>
        <end position="61"/>
    </location>
</feature>
<feature type="strand" evidence="9">
    <location>
        <begin position="64"/>
        <end position="67"/>
    </location>
</feature>
<feature type="strand" evidence="9">
    <location>
        <begin position="70"/>
        <end position="75"/>
    </location>
</feature>
<feature type="helix" evidence="9">
    <location>
        <begin position="80"/>
        <end position="82"/>
    </location>
</feature>
<feature type="helix" evidence="9">
    <location>
        <begin position="85"/>
        <end position="88"/>
    </location>
</feature>
<feature type="strand" evidence="9">
    <location>
        <begin position="91"/>
        <end position="95"/>
    </location>
</feature>
<feature type="strand" evidence="9">
    <location>
        <begin position="97"/>
        <end position="99"/>
    </location>
</feature>
<feature type="helix" evidence="9">
    <location>
        <begin position="103"/>
        <end position="106"/>
    </location>
</feature>
<feature type="helix" evidence="9">
    <location>
        <begin position="108"/>
        <end position="111"/>
    </location>
</feature>
<feature type="strand" evidence="9">
    <location>
        <begin position="115"/>
        <end position="121"/>
    </location>
</feature>
<feature type="strand" evidence="9">
    <location>
        <begin position="124"/>
        <end position="126"/>
    </location>
</feature>
<feature type="turn" evidence="9">
    <location>
        <begin position="131"/>
        <end position="133"/>
    </location>
</feature>
<feature type="helix" evidence="9">
    <location>
        <begin position="135"/>
        <end position="137"/>
    </location>
</feature>
<feature type="strand" evidence="9">
    <location>
        <begin position="144"/>
        <end position="146"/>
    </location>
</feature>
<feature type="helix" evidence="9">
    <location>
        <begin position="150"/>
        <end position="166"/>
    </location>
</feature>
<feature type="strand" evidence="9">
    <location>
        <begin position="168"/>
        <end position="178"/>
    </location>
</feature>
<feature type="strand" evidence="9">
    <location>
        <begin position="183"/>
        <end position="187"/>
    </location>
</feature>
<feature type="helix" evidence="9">
    <location>
        <begin position="194"/>
        <end position="197"/>
    </location>
</feature>
<feature type="helix" evidence="9">
    <location>
        <begin position="200"/>
        <end position="202"/>
    </location>
</feature>
<feature type="strand" evidence="9">
    <location>
        <begin position="205"/>
        <end position="208"/>
    </location>
</feature>
<feature type="helix" evidence="9">
    <location>
        <begin position="211"/>
        <end position="218"/>
    </location>
</feature>
<feature type="helix" evidence="9">
    <location>
        <begin position="220"/>
        <end position="222"/>
    </location>
</feature>
<feature type="turn" evidence="9">
    <location>
        <begin position="223"/>
        <end position="225"/>
    </location>
</feature>
<feature type="strand" evidence="9">
    <location>
        <begin position="226"/>
        <end position="234"/>
    </location>
</feature>
<feature type="strand" evidence="9">
    <location>
        <begin position="239"/>
        <end position="249"/>
    </location>
</feature>
<feature type="helix" evidence="9">
    <location>
        <begin position="253"/>
        <end position="265"/>
    </location>
</feature>
<feature type="turn" evidence="9">
    <location>
        <begin position="266"/>
        <end position="271"/>
    </location>
</feature>
<feature type="strand" evidence="9">
    <location>
        <begin position="272"/>
        <end position="275"/>
    </location>
</feature>
<feature type="helix" evidence="9">
    <location>
        <begin position="281"/>
        <end position="284"/>
    </location>
</feature>
<feature type="strand" evidence="9">
    <location>
        <begin position="290"/>
        <end position="294"/>
    </location>
</feature>
<feature type="turn" evidence="9">
    <location>
        <begin position="295"/>
        <end position="297"/>
    </location>
</feature>
<feature type="strand" evidence="9">
    <location>
        <begin position="299"/>
        <end position="302"/>
    </location>
</feature>
<feature type="strand" evidence="9">
    <location>
        <begin position="305"/>
        <end position="312"/>
    </location>
</feature>
<feature type="helix" evidence="9">
    <location>
        <begin position="316"/>
        <end position="331"/>
    </location>
</feature>
<keyword id="KW-0002">3D-structure</keyword>
<keyword id="KW-0007">Acetylation</keyword>
<keyword id="KW-0013">ADP-ribosylation</keyword>
<keyword id="KW-0053">Apoptosis</keyword>
<keyword id="KW-0963">Cytoplasm</keyword>
<keyword id="KW-0206">Cytoskeleton</keyword>
<keyword id="KW-0903">Direct protein sequencing</keyword>
<keyword id="KW-0324">Glycolysis</keyword>
<keyword id="KW-0391">Immunity</keyword>
<keyword id="KW-0399">Innate immunity</keyword>
<keyword id="KW-1017">Isopeptide bond</keyword>
<keyword id="KW-0488">Methylation</keyword>
<keyword id="KW-0520">NAD</keyword>
<keyword id="KW-0539">Nucleus</keyword>
<keyword id="KW-0560">Oxidoreductase</keyword>
<keyword id="KW-0597">Phosphoprotein</keyword>
<keyword id="KW-1185">Reference proteome</keyword>
<keyword id="KW-0702">S-nitrosylation</keyword>
<keyword id="KW-0808">Transferase</keyword>
<keyword id="KW-0810">Translation regulation</keyword>
<keyword id="KW-0832">Ubl conjugation</keyword>
<name>G3P_BOVIN</name>
<reference key="1">
    <citation type="submission" date="2005-08" db="EMBL/GenBank/DDBJ databases">
        <authorList>
            <consortium name="NIH - Mammalian Gene Collection (MGC) project"/>
        </authorList>
    </citation>
    <scope>NUCLEOTIDE SEQUENCE [LARGE SCALE MRNA]</scope>
    <source>
        <strain>Crossbred X Angus</strain>
        <tissue>Ileum</tissue>
    </source>
</reference>
<reference key="2">
    <citation type="journal article" date="1975" name="Biochem. Biophys. Res. Commun.">
        <title>Structural evidence for a liver-specific glyceraldehyde-3-phosphate dehydrogenase.</title>
        <authorList>
            <person name="Kulbe K.D."/>
            <person name="Jackson K.W."/>
            <person name="Tang J."/>
        </authorList>
    </citation>
    <scope>PROTEIN SEQUENCE OF 2-31</scope>
    <source>
        <tissue>Liver</tissue>
    </source>
</reference>
<reference key="3">
    <citation type="journal article" date="2006" name="FEBS Lett.">
        <title>Interaction of TPPP/p25 protein with glyceraldehyde-3-phosphate dehydrogenase and their co-localization in Lewy bodies.</title>
        <authorList>
            <person name="Olah J."/>
            <person name="Toekesi N."/>
            <person name="Vincze O."/>
            <person name="Horvath I."/>
            <person name="Lehotzky A."/>
            <person name="Erdei A."/>
            <person name="Szajli E."/>
            <person name="Medzihradszky K.F."/>
            <person name="Orosz F."/>
            <person name="Kovacs G.G."/>
            <person name="Ovadi J."/>
        </authorList>
    </citation>
    <scope>PROTEIN SEQUENCE OF 2-11</scope>
    <scope>INTERACTION WITH TPPP</scope>
</reference>
<reference key="4">
    <citation type="submission" date="1997-01" db="EMBL/GenBank/DDBJ databases">
        <authorList>
            <person name="Mertens B."/>
            <person name="Muriuki C."/>
        </authorList>
    </citation>
    <scope>NUCLEOTIDE SEQUENCE [MRNA] OF 11-321</scope>
    <source>
        <tissue>Lymphocyte</tissue>
    </source>
</reference>
<gene>
    <name type="primary">GAPDH</name>
    <name type="synonym">GAPD</name>
</gene>
<dbReference type="EC" id="1.2.1.12" evidence="1"/>
<dbReference type="EC" id="2.6.99.-" evidence="2"/>
<dbReference type="EMBL" id="BC102589">
    <property type="protein sequence ID" value="AAI02590.1"/>
    <property type="molecule type" value="mRNA"/>
</dbReference>
<dbReference type="EMBL" id="U85042">
    <property type="protein sequence ID" value="AAB47507.1"/>
    <property type="status" value="ALT_FRAME"/>
    <property type="molecule type" value="mRNA"/>
</dbReference>
<dbReference type="RefSeq" id="NP_001029206.1">
    <property type="nucleotide sequence ID" value="NM_001034034.2"/>
</dbReference>
<dbReference type="PDB" id="4O59">
    <property type="method" value="X-ray"/>
    <property type="resolution" value="1.52 A"/>
    <property type="chains" value="O/P/Q/R=2-333"/>
</dbReference>
<dbReference type="PDB" id="4O63">
    <property type="method" value="X-ray"/>
    <property type="resolution" value="1.93 A"/>
    <property type="chains" value="O/P/Q/R=2-333"/>
</dbReference>
<dbReference type="PDB" id="7U5M">
    <property type="method" value="EM"/>
    <property type="resolution" value="2.28 A"/>
    <property type="chains" value="A/B/C/D=1-333"/>
</dbReference>
<dbReference type="PDBsum" id="4O59"/>
<dbReference type="PDBsum" id="4O63"/>
<dbReference type="PDBsum" id="7U5M"/>
<dbReference type="EMDB" id="EMD-26355"/>
<dbReference type="SMR" id="P10096"/>
<dbReference type="BioGRID" id="158540">
    <property type="interactions" value="2"/>
</dbReference>
<dbReference type="FunCoup" id="P10096">
    <property type="interactions" value="1012"/>
</dbReference>
<dbReference type="IntAct" id="P10096">
    <property type="interactions" value="1"/>
</dbReference>
<dbReference type="MINT" id="P10096"/>
<dbReference type="STRING" id="9913.ENSBTAP00000062798"/>
<dbReference type="Allergome" id="12128">
    <property type="allergen name" value="Bos d GAPDH"/>
</dbReference>
<dbReference type="MoonProt" id="P10096"/>
<dbReference type="PaxDb" id="9913-ENSBTAP00000037577"/>
<dbReference type="PeptideAtlas" id="P10096"/>
<dbReference type="Ensembl" id="ENSBTAT00000037753.5">
    <property type="protein sequence ID" value="ENSBTAP00000037577.4"/>
    <property type="gene ID" value="ENSBTAG00000014731.7"/>
</dbReference>
<dbReference type="GeneID" id="281181"/>
<dbReference type="KEGG" id="bta:281181"/>
<dbReference type="CTD" id="2597"/>
<dbReference type="VEuPathDB" id="HostDB:ENSBTAG00000014731"/>
<dbReference type="VGNC" id="VGNC:97273">
    <property type="gene designation" value="GAPDH"/>
</dbReference>
<dbReference type="eggNOG" id="KOG0657">
    <property type="taxonomic scope" value="Eukaryota"/>
</dbReference>
<dbReference type="GeneTree" id="ENSGT00940000153298"/>
<dbReference type="HOGENOM" id="CLU_030140_0_3_1"/>
<dbReference type="InParanoid" id="P10096"/>
<dbReference type="OMA" id="YGYTCNM"/>
<dbReference type="OrthoDB" id="9669797at2759"/>
<dbReference type="TreeFam" id="TF300533"/>
<dbReference type="Reactome" id="R-BTA-70171">
    <property type="pathway name" value="Glycolysis"/>
</dbReference>
<dbReference type="Reactome" id="R-BTA-70263">
    <property type="pathway name" value="Gluconeogenesis"/>
</dbReference>
<dbReference type="UniPathway" id="UPA00109">
    <property type="reaction ID" value="UER00184"/>
</dbReference>
<dbReference type="EvolutionaryTrace" id="P10096"/>
<dbReference type="Proteomes" id="UP000009136">
    <property type="component" value="Chromosome 5"/>
</dbReference>
<dbReference type="Bgee" id="ENSBTAG00000014731">
    <property type="expression patterns" value="Expressed in retina and 107 other cell types or tissues"/>
</dbReference>
<dbReference type="GO" id="GO:0005737">
    <property type="term" value="C:cytoplasm"/>
    <property type="evidence" value="ECO:0000314"/>
    <property type="project" value="CAFA"/>
</dbReference>
<dbReference type="GO" id="GO:0005829">
    <property type="term" value="C:cytosol"/>
    <property type="evidence" value="ECO:0000250"/>
    <property type="project" value="UniProtKB"/>
</dbReference>
<dbReference type="GO" id="GO:0098850">
    <property type="term" value="C:extrinsic component of synaptic vesicle membrane"/>
    <property type="evidence" value="ECO:0000314"/>
    <property type="project" value="SynGO"/>
</dbReference>
<dbReference type="GO" id="GO:0097452">
    <property type="term" value="C:GAIT complex"/>
    <property type="evidence" value="ECO:0000250"/>
    <property type="project" value="UniProtKB"/>
</dbReference>
<dbReference type="GO" id="GO:0005811">
    <property type="term" value="C:lipid droplet"/>
    <property type="evidence" value="ECO:0007669"/>
    <property type="project" value="Ensembl"/>
</dbReference>
<dbReference type="GO" id="GO:0015630">
    <property type="term" value="C:microtubule cytoskeleton"/>
    <property type="evidence" value="ECO:0000250"/>
    <property type="project" value="UniProtKB"/>
</dbReference>
<dbReference type="GO" id="GO:0031965">
    <property type="term" value="C:nuclear membrane"/>
    <property type="evidence" value="ECO:0007669"/>
    <property type="project" value="Ensembl"/>
</dbReference>
<dbReference type="GO" id="GO:0005634">
    <property type="term" value="C:nucleus"/>
    <property type="evidence" value="ECO:0000250"/>
    <property type="project" value="UniProtKB"/>
</dbReference>
<dbReference type="GO" id="GO:0005886">
    <property type="term" value="C:plasma membrane"/>
    <property type="evidence" value="ECO:0007669"/>
    <property type="project" value="Ensembl"/>
</dbReference>
<dbReference type="GO" id="GO:1990904">
    <property type="term" value="C:ribonucleoprotein complex"/>
    <property type="evidence" value="ECO:0007669"/>
    <property type="project" value="Ensembl"/>
</dbReference>
<dbReference type="GO" id="GO:0019828">
    <property type="term" value="F:aspartic-type endopeptidase inhibitor activity"/>
    <property type="evidence" value="ECO:0007669"/>
    <property type="project" value="Ensembl"/>
</dbReference>
<dbReference type="GO" id="GO:0097718">
    <property type="term" value="F:disordered domain specific binding"/>
    <property type="evidence" value="ECO:0000353"/>
    <property type="project" value="CAFA"/>
</dbReference>
<dbReference type="GO" id="GO:0004365">
    <property type="term" value="F:glyceraldehyde-3-phosphate dehydrogenase (NAD+) (phosphorylating) activity"/>
    <property type="evidence" value="ECO:0000250"/>
    <property type="project" value="UniProtKB"/>
</dbReference>
<dbReference type="GO" id="GO:0042802">
    <property type="term" value="F:identical protein binding"/>
    <property type="evidence" value="ECO:0007669"/>
    <property type="project" value="Ensembl"/>
</dbReference>
<dbReference type="GO" id="GO:0008017">
    <property type="term" value="F:microtubule binding"/>
    <property type="evidence" value="ECO:0000250"/>
    <property type="project" value="UniProtKB"/>
</dbReference>
<dbReference type="GO" id="GO:0051287">
    <property type="term" value="F:NAD binding"/>
    <property type="evidence" value="ECO:0007669"/>
    <property type="project" value="InterPro"/>
</dbReference>
<dbReference type="GO" id="GO:0050661">
    <property type="term" value="F:NADP binding"/>
    <property type="evidence" value="ECO:0007669"/>
    <property type="project" value="InterPro"/>
</dbReference>
<dbReference type="GO" id="GO:0035605">
    <property type="term" value="F:peptidyl-cysteine S-nitrosylase activity"/>
    <property type="evidence" value="ECO:0000250"/>
    <property type="project" value="UniProtKB"/>
</dbReference>
<dbReference type="GO" id="GO:0061844">
    <property type="term" value="P:antimicrobial humoral immune response mediated by antimicrobial peptide"/>
    <property type="evidence" value="ECO:0007669"/>
    <property type="project" value="Ensembl"/>
</dbReference>
<dbReference type="GO" id="GO:0071346">
    <property type="term" value="P:cellular response to type II interferon"/>
    <property type="evidence" value="ECO:0007669"/>
    <property type="project" value="Ensembl"/>
</dbReference>
<dbReference type="GO" id="GO:0050832">
    <property type="term" value="P:defense response to fungus"/>
    <property type="evidence" value="ECO:0007669"/>
    <property type="project" value="Ensembl"/>
</dbReference>
<dbReference type="GO" id="GO:0006006">
    <property type="term" value="P:glucose metabolic process"/>
    <property type="evidence" value="ECO:0007669"/>
    <property type="project" value="InterPro"/>
</dbReference>
<dbReference type="GO" id="GO:0006096">
    <property type="term" value="P:glycolytic process"/>
    <property type="evidence" value="ECO:0000318"/>
    <property type="project" value="GO_Central"/>
</dbReference>
<dbReference type="GO" id="GO:0051873">
    <property type="term" value="P:killing by host of symbiont cells"/>
    <property type="evidence" value="ECO:0007669"/>
    <property type="project" value="Ensembl"/>
</dbReference>
<dbReference type="GO" id="GO:0000226">
    <property type="term" value="P:microtubule cytoskeleton organization"/>
    <property type="evidence" value="ECO:0000250"/>
    <property type="project" value="UniProtKB"/>
</dbReference>
<dbReference type="GO" id="GO:0017148">
    <property type="term" value="P:negative regulation of translation"/>
    <property type="evidence" value="ECO:0007669"/>
    <property type="project" value="Ensembl"/>
</dbReference>
<dbReference type="GO" id="GO:0051402">
    <property type="term" value="P:neuron apoptotic process"/>
    <property type="evidence" value="ECO:0000250"/>
    <property type="project" value="UniProtKB"/>
</dbReference>
<dbReference type="GO" id="GO:0035606">
    <property type="term" value="P:peptidyl-cysteine S-trans-nitrosylation"/>
    <property type="evidence" value="ECO:0000250"/>
    <property type="project" value="UniProtKB"/>
</dbReference>
<dbReference type="GO" id="GO:0043123">
    <property type="term" value="P:positive regulation of canonical NF-kappaB signal transduction"/>
    <property type="evidence" value="ECO:0000250"/>
    <property type="project" value="UniProtKB"/>
</dbReference>
<dbReference type="GO" id="GO:0032481">
    <property type="term" value="P:positive regulation of type I interferon production"/>
    <property type="evidence" value="ECO:0000250"/>
    <property type="project" value="UniProtKB"/>
</dbReference>
<dbReference type="GO" id="GO:0050821">
    <property type="term" value="P:protein stabilization"/>
    <property type="evidence" value="ECO:0000250"/>
    <property type="project" value="UniProtKB"/>
</dbReference>
<dbReference type="GO" id="GO:0099162">
    <property type="term" value="P:regulation of neurotransmitter loading into synaptic vesicle"/>
    <property type="evidence" value="ECO:0000314"/>
    <property type="project" value="SynGO"/>
</dbReference>
<dbReference type="CDD" id="cd18126">
    <property type="entry name" value="GAPDH_I_C"/>
    <property type="match status" value="1"/>
</dbReference>
<dbReference type="CDD" id="cd05214">
    <property type="entry name" value="GAPDH_I_N"/>
    <property type="match status" value="1"/>
</dbReference>
<dbReference type="FunFam" id="3.30.360.10:FF:000001">
    <property type="entry name" value="Glyceraldehyde-3-phosphate dehydrogenase"/>
    <property type="match status" value="1"/>
</dbReference>
<dbReference type="FunFam" id="3.40.50.720:FF:001161">
    <property type="entry name" value="Glyceraldehyde-3-phosphate dehydrogenase"/>
    <property type="match status" value="1"/>
</dbReference>
<dbReference type="Gene3D" id="3.30.360.10">
    <property type="entry name" value="Dihydrodipicolinate Reductase, domain 2"/>
    <property type="match status" value="1"/>
</dbReference>
<dbReference type="Gene3D" id="3.40.50.720">
    <property type="entry name" value="NAD(P)-binding Rossmann-like Domain"/>
    <property type="match status" value="1"/>
</dbReference>
<dbReference type="InterPro" id="IPR020831">
    <property type="entry name" value="GlycerAld/Erythrose_P_DH"/>
</dbReference>
<dbReference type="InterPro" id="IPR020830">
    <property type="entry name" value="GlycerAld_3-P_DH_AS"/>
</dbReference>
<dbReference type="InterPro" id="IPR020829">
    <property type="entry name" value="GlycerAld_3-P_DH_cat"/>
</dbReference>
<dbReference type="InterPro" id="IPR020828">
    <property type="entry name" value="GlycerAld_3-P_DH_NAD(P)-bd"/>
</dbReference>
<dbReference type="InterPro" id="IPR006424">
    <property type="entry name" value="Glyceraldehyde-3-P_DH_1"/>
</dbReference>
<dbReference type="InterPro" id="IPR036291">
    <property type="entry name" value="NAD(P)-bd_dom_sf"/>
</dbReference>
<dbReference type="NCBIfam" id="TIGR01534">
    <property type="entry name" value="GAPDH-I"/>
    <property type="match status" value="1"/>
</dbReference>
<dbReference type="PANTHER" id="PTHR10836">
    <property type="entry name" value="GLYCERALDEHYDE 3-PHOSPHATE DEHYDROGENASE"/>
    <property type="match status" value="1"/>
</dbReference>
<dbReference type="PANTHER" id="PTHR10836:SF111">
    <property type="entry name" value="GLYCERALDEHYDE-3-PHOSPHATE DEHYDROGENASE"/>
    <property type="match status" value="1"/>
</dbReference>
<dbReference type="Pfam" id="PF02800">
    <property type="entry name" value="Gp_dh_C"/>
    <property type="match status" value="1"/>
</dbReference>
<dbReference type="Pfam" id="PF00044">
    <property type="entry name" value="Gp_dh_N"/>
    <property type="match status" value="1"/>
</dbReference>
<dbReference type="PIRSF" id="PIRSF000149">
    <property type="entry name" value="GAP_DH"/>
    <property type="match status" value="1"/>
</dbReference>
<dbReference type="PRINTS" id="PR00078">
    <property type="entry name" value="G3PDHDRGNASE"/>
</dbReference>
<dbReference type="SMART" id="SM00846">
    <property type="entry name" value="Gp_dh_N"/>
    <property type="match status" value="1"/>
</dbReference>
<dbReference type="SUPFAM" id="SSF55347">
    <property type="entry name" value="Glyceraldehyde-3-phosphate dehydrogenase-like, C-terminal domain"/>
    <property type="match status" value="1"/>
</dbReference>
<dbReference type="SUPFAM" id="SSF51735">
    <property type="entry name" value="NAD(P)-binding Rossmann-fold domains"/>
    <property type="match status" value="1"/>
</dbReference>
<dbReference type="PROSITE" id="PS00071">
    <property type="entry name" value="GAPDH"/>
    <property type="match status" value="1"/>
</dbReference>
<protein>
    <recommendedName>
        <fullName>Glyceraldehyde-3-phosphate dehydrogenase</fullName>
        <shortName>GAPDH</shortName>
        <ecNumber evidence="1">1.2.1.12</ecNumber>
    </recommendedName>
    <alternativeName>
        <fullName evidence="8">Peptidyl-cysteine S-nitrosylase GAPDH</fullName>
        <ecNumber evidence="2">2.6.99.-</ecNumber>
    </alternativeName>
</protein>
<evidence type="ECO:0000250" key="1">
    <source>
        <dbReference type="UniProtKB" id="P04406"/>
    </source>
</evidence>
<evidence type="ECO:0000250" key="2">
    <source>
        <dbReference type="UniProtKB" id="P04797"/>
    </source>
</evidence>
<evidence type="ECO:0000250" key="3">
    <source>
        <dbReference type="UniProtKB" id="P16858"/>
    </source>
</evidence>
<evidence type="ECO:0000250" key="4">
    <source>
        <dbReference type="UniProtKB" id="P22513"/>
    </source>
</evidence>
<evidence type="ECO:0000255" key="5">
    <source>
        <dbReference type="PROSITE-ProRule" id="PRU10009"/>
    </source>
</evidence>
<evidence type="ECO:0000269" key="6">
    <source>
    </source>
</evidence>
<evidence type="ECO:0000269" key="7">
    <source>
    </source>
</evidence>
<evidence type="ECO:0000305" key="8"/>
<evidence type="ECO:0007829" key="9">
    <source>
        <dbReference type="PDB" id="4O59"/>
    </source>
</evidence>
<organism>
    <name type="scientific">Bos taurus</name>
    <name type="common">Bovine</name>
    <dbReference type="NCBI Taxonomy" id="9913"/>
    <lineage>
        <taxon>Eukaryota</taxon>
        <taxon>Metazoa</taxon>
        <taxon>Chordata</taxon>
        <taxon>Craniata</taxon>
        <taxon>Vertebrata</taxon>
        <taxon>Euteleostomi</taxon>
        <taxon>Mammalia</taxon>
        <taxon>Eutheria</taxon>
        <taxon>Laurasiatheria</taxon>
        <taxon>Artiodactyla</taxon>
        <taxon>Ruminantia</taxon>
        <taxon>Pecora</taxon>
        <taxon>Bovidae</taxon>
        <taxon>Bovinae</taxon>
        <taxon>Bos</taxon>
    </lineage>
</organism>
<proteinExistence type="evidence at protein level"/>
<comment type="function">
    <text evidence="1 2">Has both glyceraldehyde-3-phosphate dehydrogenase and nitrosylase activities, thereby playing a role in glycolysis and nuclear functions, respectively. Glyceraldehyde-3-phosphate dehydrogenase is a key enzyme in glycolysis that catalyzes the first step of the pathway by converting D-glyceraldehyde 3-phosphate (G3P) into 3-phospho-D-glyceroyl phosphate (By similarity). Modulates the organization and assembly of the cytoskeleton. Facilitates the CHP1-dependent microtubule and membrane associations through its ability to stimulate the binding of CHP1 to microtubules (By similarity). Component of the GAIT (gamma interferon-activated inhibitor of translation) complex which mediates interferon-gamma-induced transcript-selective translation inhibition in inflammation processes. Upon interferon-gamma treatment assembles into the GAIT complex which binds to stem loop-containing GAIT elements in the 3'-UTR of diverse inflammatory mRNAs (such as ceruplasmin) and suppresses their translation. Also plays a role in innate immunity by promoting TNF-induced NF-kappa-B activation and type I interferon production, via interaction with TRAF2 and TRAF3, respectively (By similarity). Participates in nuclear events including transcription, RNA transport, DNA replication and apoptosis. Nuclear functions are probably due to the nitrosylase activity that mediates cysteine S-nitrosylation of nuclear target proteins such as SIRT1, HDAC2 and PRKDC (By similarity).</text>
</comment>
<comment type="catalytic activity">
    <reaction evidence="1 5">
        <text>D-glyceraldehyde 3-phosphate + phosphate + NAD(+) = (2R)-3-phospho-glyceroyl phosphate + NADH + H(+)</text>
        <dbReference type="Rhea" id="RHEA:10300"/>
        <dbReference type="ChEBI" id="CHEBI:15378"/>
        <dbReference type="ChEBI" id="CHEBI:43474"/>
        <dbReference type="ChEBI" id="CHEBI:57540"/>
        <dbReference type="ChEBI" id="CHEBI:57604"/>
        <dbReference type="ChEBI" id="CHEBI:57945"/>
        <dbReference type="ChEBI" id="CHEBI:59776"/>
        <dbReference type="EC" id="1.2.1.12"/>
    </reaction>
</comment>
<comment type="catalytic activity">
    <reaction evidence="2">
        <text>S-nitroso-L-cysteinyl-[GAPDH] + L-cysteinyl-[protein] = L-cysteinyl-[GAPDH] + S-nitroso-L-cysteinyl-[protein]</text>
        <dbReference type="Rhea" id="RHEA:66684"/>
        <dbReference type="Rhea" id="RHEA-COMP:10131"/>
        <dbReference type="Rhea" id="RHEA-COMP:17089"/>
        <dbReference type="Rhea" id="RHEA-COMP:17090"/>
        <dbReference type="Rhea" id="RHEA-COMP:17091"/>
        <dbReference type="ChEBI" id="CHEBI:29950"/>
        <dbReference type="ChEBI" id="CHEBI:149494"/>
    </reaction>
    <physiologicalReaction direction="left-to-right" evidence="2">
        <dbReference type="Rhea" id="RHEA:66685"/>
    </physiologicalReaction>
</comment>
<comment type="activity regulation">
    <text evidence="2">Glyceraldehyde-3-phosphate dehydrogenase activity is inhibited by fumarate, via the formation of S-(2-succinyl)cysteine residues.</text>
</comment>
<comment type="pathway">
    <text>Carbohydrate degradation; glycolysis; pyruvate from D-glyceraldehyde 3-phosphate: step 1/5.</text>
</comment>
<comment type="subunit">
    <text evidence="1 2 7">Homotetramer (By similarity). Interacts with TPPP; the interaction is direct (PubMed:17027006). Interacts (when S-nitrosylated) with SIAH1; leading to nuclear translocation. Interacts with RILPL1/GOSPEL, leading to prevent the interaction between GAPDH and SIAH1 and prevent nuclear translocation. Interacts with CHP1; the interaction increases the binding of CHP1 with microtubules. Associates with microtubules (By similarity). Interacts with EIF1AD, USP25, PRKCI and WARS1. Interacts with phosphorylated RPL13A; inhibited by oxidatively-modified low-densitity lipoprotein (LDL(ox)). Component of the GAIT complex. Interacts with FKBP6; leading to inhibit GAPDH catalytic activity. Interacts with TRAF2, promoting TRAF2 ubiquitination. Interacts with TRAF3, promoting TRAF3 ubiquitination (By similarity).</text>
</comment>
<comment type="interaction">
    <interactant intactId="EBI-7025562">
        <id>P10096</id>
    </interactant>
    <interactant intactId="EBI-7025612">
        <id>Q27957</id>
        <label>TPPP</label>
    </interactant>
    <organismsDiffer>false</organismsDiffer>
    <experiments>2</experiments>
</comment>
<comment type="subcellular location">
    <subcellularLocation>
        <location evidence="2">Cytoplasm</location>
        <location evidence="2">Cytosol</location>
    </subcellularLocation>
    <subcellularLocation>
        <location evidence="2">Cytoplasm</location>
        <location evidence="2">Cytoskeleton</location>
    </subcellularLocation>
    <subcellularLocation>
        <location evidence="2">Nucleus</location>
    </subcellularLocation>
    <text evidence="2">Translocates to the nucleus following S-nitrosylation and interaction with SIAH1, which contains a nuclear localization signal. Colocalizes with CHP1 to small punctate structures along the microtubules tracks.</text>
</comment>
<comment type="domain">
    <text evidence="1">The [IL]-x-C-x-x-[DE] motif is a proposed target motif for cysteine S-nitrosylation mediated by the iNOS-S100A8/A9 transnitrosylase complex.</text>
</comment>
<comment type="PTM">
    <text evidence="1">ISGylated.</text>
</comment>
<comment type="PTM">
    <text evidence="1 2">S-nitrosylation of Cys-150 leads to interaction with SIAH1, followed by translocation to the nucleus S-nitrosylation of Cys-245 is induced by interferon-gamma and LDL(ox) implicating the iNOS-S100A8/9 transnitrosylase complex and seems to prevent interaction with phosphorylated RPL13A and to interfere with GAIT complex activity (By similarity).</text>
</comment>
<comment type="PTM">
    <text evidence="3">Sulfhydration at Cys-150 increases catalytic activity.</text>
</comment>
<comment type="PTM">
    <text evidence="1">Oxidative stress can promote the formation of high molecular weight disulfide-linked GAPDH aggregates, through a process called nucleocytoplasmic coagulation.</text>
</comment>
<comment type="similarity">
    <text evidence="8">Belongs to the glyceraldehyde-3-phosphate dehydrogenase family.</text>
</comment>
<comment type="sequence caution" evidence="8">
    <conflict type="frameshift">
        <sequence resource="EMBL-CDS" id="AAB47507"/>
    </conflict>
</comment>
<sequence>MVKVGVNGFGRIGRLVTRAAFNSGKVDIVAINDPFIDLHYMVYMFQYDSTHGKFNGTVKAENGKLVINGKAITIFQERDPANIKWGDAGAEYVVESTGVFTTMEKAGAHLKGGAKRVIISAPSADAPMFVMGVNHEKYNNTLKIVSNASCTTNCLAPLAKVIHDHFGIVEGLMTTVHAITATQKTVDGPSGKLWRDGRGAAQNIIPASTGAAKAVGKVIPELNGKLTGMAFRVPTPNVSVVDLTCRLEKPAKYDEIKKVVKQASEGPLKGILGYTEDQVVSCDFNSDTHSSTFDAGAGIALNDHFVKLISWYDNEFGYSNRVVDLMVHMASKE</sequence>